<organism>
    <name type="scientific">Odocoileus virginianus virginianus</name>
    <name type="common">Virginia white-tailed deer</name>
    <dbReference type="NCBI Taxonomy" id="9875"/>
    <lineage>
        <taxon>Eukaryota</taxon>
        <taxon>Metazoa</taxon>
        <taxon>Chordata</taxon>
        <taxon>Craniata</taxon>
        <taxon>Vertebrata</taxon>
        <taxon>Euteleostomi</taxon>
        <taxon>Mammalia</taxon>
        <taxon>Eutheria</taxon>
        <taxon>Laurasiatheria</taxon>
        <taxon>Artiodactyla</taxon>
        <taxon>Ruminantia</taxon>
        <taxon>Pecora</taxon>
        <taxon>Cervidae</taxon>
        <taxon>Odocoileinae</taxon>
        <taxon>Odocoileus</taxon>
    </lineage>
</organism>
<sequence>MLTAEEKAAVTGFWGKVNVDVVGAEALGRLLVVYPWTQRFFEHFGDLSSAGAVMGNPKVKAHGKRVLDAFSEGLKHLDDLKGAFAELSELHCNKLHVDPENFRLLGNVLVVVLARNFGGEFTPLVQADFQKVVAGVANALAHRYH</sequence>
<name>HBB_ODOVI</name>
<keyword id="KW-0002">3D-structure</keyword>
<keyword id="KW-0007">Acetylation</keyword>
<keyword id="KW-0903">Direct protein sequencing</keyword>
<keyword id="KW-0349">Heme</keyword>
<keyword id="KW-0408">Iron</keyword>
<keyword id="KW-0479">Metal-binding</keyword>
<keyword id="KW-0561">Oxygen transport</keyword>
<keyword id="KW-0597">Phosphoprotein</keyword>
<keyword id="KW-0702">S-nitrosylation</keyword>
<keyword id="KW-0813">Transport</keyword>
<accession>P02074</accession>
<protein>
    <recommendedName>
        <fullName>Hemoglobin subunit beta-3</fullName>
    </recommendedName>
    <alternativeName>
        <fullName>Beta-3-globin</fullName>
    </alternativeName>
    <alternativeName>
        <fullName>Hemoglobin beta-3 chain</fullName>
    </alternativeName>
    <alternativeName>
        <fullName>Hemoglobin beta-III chain</fullName>
    </alternativeName>
</protein>
<dbReference type="PIR" id="A02393">
    <property type="entry name" value="HBDE3"/>
</dbReference>
<dbReference type="PDB" id="1HDS">
    <property type="method" value="X-ray"/>
    <property type="resolution" value="1.98 A"/>
    <property type="chains" value="B/D=1-145"/>
</dbReference>
<dbReference type="PDBsum" id="1HDS"/>
<dbReference type="SMR" id="P02074"/>
<dbReference type="EvolutionaryTrace" id="P02074"/>
<dbReference type="GO" id="GO:0072562">
    <property type="term" value="C:blood microparticle"/>
    <property type="evidence" value="ECO:0007669"/>
    <property type="project" value="TreeGrafter"/>
</dbReference>
<dbReference type="GO" id="GO:0031838">
    <property type="term" value="C:haptoglobin-hemoglobin complex"/>
    <property type="evidence" value="ECO:0007669"/>
    <property type="project" value="TreeGrafter"/>
</dbReference>
<dbReference type="GO" id="GO:0005833">
    <property type="term" value="C:hemoglobin complex"/>
    <property type="evidence" value="ECO:0007669"/>
    <property type="project" value="InterPro"/>
</dbReference>
<dbReference type="GO" id="GO:0031720">
    <property type="term" value="F:haptoglobin binding"/>
    <property type="evidence" value="ECO:0007669"/>
    <property type="project" value="TreeGrafter"/>
</dbReference>
<dbReference type="GO" id="GO:0020037">
    <property type="term" value="F:heme binding"/>
    <property type="evidence" value="ECO:0007669"/>
    <property type="project" value="InterPro"/>
</dbReference>
<dbReference type="GO" id="GO:0031721">
    <property type="term" value="F:hemoglobin alpha binding"/>
    <property type="evidence" value="ECO:0007669"/>
    <property type="project" value="TreeGrafter"/>
</dbReference>
<dbReference type="GO" id="GO:0046872">
    <property type="term" value="F:metal ion binding"/>
    <property type="evidence" value="ECO:0007669"/>
    <property type="project" value="UniProtKB-KW"/>
</dbReference>
<dbReference type="GO" id="GO:0043177">
    <property type="term" value="F:organic acid binding"/>
    <property type="evidence" value="ECO:0007669"/>
    <property type="project" value="TreeGrafter"/>
</dbReference>
<dbReference type="GO" id="GO:0019825">
    <property type="term" value="F:oxygen binding"/>
    <property type="evidence" value="ECO:0007669"/>
    <property type="project" value="InterPro"/>
</dbReference>
<dbReference type="GO" id="GO:0005344">
    <property type="term" value="F:oxygen carrier activity"/>
    <property type="evidence" value="ECO:0007669"/>
    <property type="project" value="UniProtKB-KW"/>
</dbReference>
<dbReference type="GO" id="GO:0004601">
    <property type="term" value="F:peroxidase activity"/>
    <property type="evidence" value="ECO:0007669"/>
    <property type="project" value="TreeGrafter"/>
</dbReference>
<dbReference type="GO" id="GO:0042744">
    <property type="term" value="P:hydrogen peroxide catabolic process"/>
    <property type="evidence" value="ECO:0007669"/>
    <property type="project" value="TreeGrafter"/>
</dbReference>
<dbReference type="CDD" id="cd08925">
    <property type="entry name" value="Hb-beta-like"/>
    <property type="match status" value="1"/>
</dbReference>
<dbReference type="FunFam" id="1.10.490.10:FF:000001">
    <property type="entry name" value="Hemoglobin subunit beta"/>
    <property type="match status" value="1"/>
</dbReference>
<dbReference type="Gene3D" id="1.10.490.10">
    <property type="entry name" value="Globins"/>
    <property type="match status" value="1"/>
</dbReference>
<dbReference type="InterPro" id="IPR000971">
    <property type="entry name" value="Globin"/>
</dbReference>
<dbReference type="InterPro" id="IPR009050">
    <property type="entry name" value="Globin-like_sf"/>
</dbReference>
<dbReference type="InterPro" id="IPR012292">
    <property type="entry name" value="Globin/Proto"/>
</dbReference>
<dbReference type="InterPro" id="IPR002337">
    <property type="entry name" value="Hemoglobin_b"/>
</dbReference>
<dbReference type="InterPro" id="IPR050056">
    <property type="entry name" value="Hemoglobin_oxygen_transport"/>
</dbReference>
<dbReference type="PANTHER" id="PTHR11442">
    <property type="entry name" value="HEMOGLOBIN FAMILY MEMBER"/>
    <property type="match status" value="1"/>
</dbReference>
<dbReference type="PANTHER" id="PTHR11442:SF42">
    <property type="entry name" value="HEMOGLOBIN SUBUNIT BETA"/>
    <property type="match status" value="1"/>
</dbReference>
<dbReference type="Pfam" id="PF00042">
    <property type="entry name" value="Globin"/>
    <property type="match status" value="1"/>
</dbReference>
<dbReference type="PRINTS" id="PR00814">
    <property type="entry name" value="BETAHAEM"/>
</dbReference>
<dbReference type="SUPFAM" id="SSF46458">
    <property type="entry name" value="Globin-like"/>
    <property type="match status" value="1"/>
</dbReference>
<dbReference type="PROSITE" id="PS01033">
    <property type="entry name" value="GLOBIN"/>
    <property type="match status" value="1"/>
</dbReference>
<feature type="chain" id="PRO_0000053039" description="Hemoglobin subunit beta-3">
    <location>
        <begin position="1"/>
        <end position="145"/>
    </location>
</feature>
<feature type="domain" description="Globin" evidence="3">
    <location>
        <begin position="1"/>
        <end position="145"/>
    </location>
</feature>
<feature type="binding site" description="distal binding residue" evidence="2">
    <location>
        <position position="62"/>
    </location>
    <ligand>
        <name>heme b</name>
        <dbReference type="ChEBI" id="CHEBI:60344"/>
    </ligand>
    <ligandPart>
        <name>Fe</name>
        <dbReference type="ChEBI" id="CHEBI:18248"/>
    </ligandPart>
</feature>
<feature type="binding site" description="proximal binding residue" evidence="4 6">
    <location>
        <position position="91"/>
    </location>
    <ligand>
        <name>heme b</name>
        <dbReference type="ChEBI" id="CHEBI:60344"/>
    </ligand>
    <ligandPart>
        <name>Fe</name>
        <dbReference type="ChEBI" id="CHEBI:18248"/>
    </ligandPart>
</feature>
<feature type="modified residue" description="Phosphothreonine" evidence="1">
    <location>
        <position position="11"/>
    </location>
</feature>
<feature type="modified residue" description="N6-acetyllysine" evidence="1">
    <location>
        <position position="58"/>
    </location>
</feature>
<feature type="modified residue" description="N6-acetyllysine" evidence="1">
    <location>
        <position position="81"/>
    </location>
</feature>
<feature type="modified residue" description="S-nitrosocysteine" evidence="1">
    <location>
        <position position="92"/>
    </location>
</feature>
<feature type="helix" evidence="7">
    <location>
        <begin position="6"/>
        <end position="13"/>
    </location>
</feature>
<feature type="turn" evidence="7">
    <location>
        <begin position="14"/>
        <end position="16"/>
    </location>
</feature>
<feature type="helix" evidence="7">
    <location>
        <begin position="22"/>
        <end position="30"/>
    </location>
</feature>
<feature type="turn" evidence="7">
    <location>
        <begin position="31"/>
        <end position="33"/>
    </location>
</feature>
<feature type="turn" evidence="7">
    <location>
        <begin position="38"/>
        <end position="40"/>
    </location>
</feature>
<feature type="helix" evidence="7">
    <location>
        <begin position="41"/>
        <end position="43"/>
    </location>
</feature>
<feature type="helix" evidence="7">
    <location>
        <begin position="50"/>
        <end position="55"/>
    </location>
</feature>
<feature type="helix" evidence="7">
    <location>
        <begin position="58"/>
        <end position="65"/>
    </location>
</feature>
<feature type="strand" evidence="7">
    <location>
        <begin position="73"/>
        <end position="79"/>
    </location>
</feature>
<feature type="strand" evidence="7">
    <location>
        <begin position="81"/>
        <end position="84"/>
    </location>
</feature>
<feature type="helix" evidence="7">
    <location>
        <begin position="87"/>
        <end position="93"/>
    </location>
</feature>
<feature type="helix" evidence="7">
    <location>
        <begin position="99"/>
        <end position="117"/>
    </location>
</feature>
<feature type="helix" evidence="7">
    <location>
        <begin position="123"/>
        <end position="142"/>
    </location>
</feature>
<proteinExistence type="evidence at protein level"/>
<comment type="function">
    <text>Involved in oxygen transport from the lung to the various peripheral tissues.</text>
</comment>
<comment type="subunit">
    <text>Heterotetramer of two alpha chains and two beta chains.</text>
</comment>
<comment type="tissue specificity">
    <text>Red blood cells.</text>
</comment>
<comment type="polymorphism">
    <text evidence="5">This chain is one of five beta chain alleles.</text>
</comment>
<comment type="similarity">
    <text evidence="3">Belongs to the globin family.</text>
</comment>
<reference key="1">
    <citation type="journal article" date="1983" name="Hemoglobin">
        <title>The primary sequence of the beta chain of Hb type III of the Virginia white-tailed deer (Odocoilus Virginianus), a comparison with putative sequences of the beta chains from four additional deer hemoglobins, types II, IV, V, and VIII, and relationships between intermolecular contacts, primary sequence and sickling of deer hemoglobins.</title>
        <authorList>
            <person name="Shimizu K."/>
            <person name="Wong S.C."/>
            <person name="Wilson J.B."/>
            <person name="Lam H."/>
            <person name="Reynolds A.E."/>
            <person name="Singh P."/>
            <person name="Huisman T.H.J."/>
            <person name="Charles N.G."/>
            <person name="Amma E.L."/>
        </authorList>
    </citation>
    <scope>PROTEIN SEQUENCE</scope>
</reference>
<reference key="2">
    <citation type="journal article" date="1977" name="Acta Crystallogr. B">
        <title>The structure of sickling deer type III hemoglobin by molecular replacement.</title>
        <authorList>
            <person name="Schmidt W.C. Jr."/>
            <person name="Girling R.L."/>
            <person name="Houston T.E."/>
            <person name="Sproul G.D."/>
            <person name="Amma E.L."/>
            <person name="Huisman T.H.J."/>
        </authorList>
    </citation>
    <scope>X-RAY CRYSTALLOGRAPHY (1.98 ANGSTROMS) IN COMPLEX WITH HEME</scope>
</reference>
<evidence type="ECO:0000250" key="1">
    <source>
        <dbReference type="UniProtKB" id="P68871"/>
    </source>
</evidence>
<evidence type="ECO:0000250" key="2">
    <source>
        <dbReference type="UniProtKB" id="P80044"/>
    </source>
</evidence>
<evidence type="ECO:0000255" key="3">
    <source>
        <dbReference type="PROSITE-ProRule" id="PRU00238"/>
    </source>
</evidence>
<evidence type="ECO:0000269" key="4">
    <source ref="2"/>
</evidence>
<evidence type="ECO:0000305" key="5">
    <source>
    </source>
</evidence>
<evidence type="ECO:0007744" key="6">
    <source>
        <dbReference type="PDB" id="1HDS"/>
    </source>
</evidence>
<evidence type="ECO:0007829" key="7">
    <source>
        <dbReference type="PDB" id="1HDS"/>
    </source>
</evidence>
<gene>
    <name type="primary">HBB</name>
</gene>